<name>RL31B_SALPA</name>
<gene>
    <name evidence="1" type="primary">rpmE2</name>
    <name type="ordered locus">SPA2253</name>
</gene>
<evidence type="ECO:0000255" key="1">
    <source>
        <dbReference type="HAMAP-Rule" id="MF_00502"/>
    </source>
</evidence>
<evidence type="ECO:0000305" key="2"/>
<protein>
    <recommendedName>
        <fullName evidence="1">Large ribosomal subunit protein bL31B</fullName>
    </recommendedName>
    <alternativeName>
        <fullName evidence="2">50S ribosomal protein L31 type B</fullName>
    </alternativeName>
</protein>
<keyword id="KW-0687">Ribonucleoprotein</keyword>
<keyword id="KW-0689">Ribosomal protein</keyword>
<organism>
    <name type="scientific">Salmonella paratyphi A (strain ATCC 9150 / SARB42)</name>
    <dbReference type="NCBI Taxonomy" id="295319"/>
    <lineage>
        <taxon>Bacteria</taxon>
        <taxon>Pseudomonadati</taxon>
        <taxon>Pseudomonadota</taxon>
        <taxon>Gammaproteobacteria</taxon>
        <taxon>Enterobacterales</taxon>
        <taxon>Enterobacteriaceae</taxon>
        <taxon>Salmonella</taxon>
    </lineage>
</organism>
<sequence length="86" mass="9757">MKPDIHPVYRTVVFHDTSANEYVKVGSTIKTEREIELGGVTYPYVTIDVSSKSHPFYTGRQKTFDSESSAARFQKRFGHFIGAKRG</sequence>
<dbReference type="EMBL" id="CP000026">
    <property type="protein sequence ID" value="AAV78139.1"/>
    <property type="molecule type" value="Genomic_DNA"/>
</dbReference>
<dbReference type="RefSeq" id="WP_000801418.1">
    <property type="nucleotide sequence ID" value="NC_006511.1"/>
</dbReference>
<dbReference type="SMR" id="Q5PFL9"/>
<dbReference type="KEGG" id="spt:SPA2253"/>
<dbReference type="HOGENOM" id="CLU_114306_2_1_6"/>
<dbReference type="Proteomes" id="UP000008185">
    <property type="component" value="Chromosome"/>
</dbReference>
<dbReference type="GO" id="GO:1990904">
    <property type="term" value="C:ribonucleoprotein complex"/>
    <property type="evidence" value="ECO:0007669"/>
    <property type="project" value="UniProtKB-KW"/>
</dbReference>
<dbReference type="GO" id="GO:0005840">
    <property type="term" value="C:ribosome"/>
    <property type="evidence" value="ECO:0007669"/>
    <property type="project" value="UniProtKB-KW"/>
</dbReference>
<dbReference type="GO" id="GO:0003735">
    <property type="term" value="F:structural constituent of ribosome"/>
    <property type="evidence" value="ECO:0007669"/>
    <property type="project" value="InterPro"/>
</dbReference>
<dbReference type="GO" id="GO:0006412">
    <property type="term" value="P:translation"/>
    <property type="evidence" value="ECO:0007669"/>
    <property type="project" value="UniProtKB-UniRule"/>
</dbReference>
<dbReference type="Gene3D" id="4.10.830.30">
    <property type="entry name" value="Ribosomal protein L31"/>
    <property type="match status" value="1"/>
</dbReference>
<dbReference type="HAMAP" id="MF_00502">
    <property type="entry name" value="Ribosomal_bL31_2"/>
    <property type="match status" value="1"/>
</dbReference>
<dbReference type="InterPro" id="IPR034704">
    <property type="entry name" value="Ribosomal_bL28/bL31-like_sf"/>
</dbReference>
<dbReference type="InterPro" id="IPR002150">
    <property type="entry name" value="Ribosomal_bL31"/>
</dbReference>
<dbReference type="InterPro" id="IPR027493">
    <property type="entry name" value="Ribosomal_bL31_B"/>
</dbReference>
<dbReference type="InterPro" id="IPR042105">
    <property type="entry name" value="Ribosomal_bL31_sf"/>
</dbReference>
<dbReference type="NCBIfam" id="TIGR00105">
    <property type="entry name" value="L31"/>
    <property type="match status" value="1"/>
</dbReference>
<dbReference type="NCBIfam" id="NF002462">
    <property type="entry name" value="PRK01678.1"/>
    <property type="match status" value="1"/>
</dbReference>
<dbReference type="PANTHER" id="PTHR33280">
    <property type="entry name" value="50S RIBOSOMAL PROTEIN L31, CHLOROPLASTIC"/>
    <property type="match status" value="1"/>
</dbReference>
<dbReference type="PANTHER" id="PTHR33280:SF1">
    <property type="entry name" value="LARGE RIBOSOMAL SUBUNIT PROTEIN BL31C"/>
    <property type="match status" value="1"/>
</dbReference>
<dbReference type="Pfam" id="PF01197">
    <property type="entry name" value="Ribosomal_L31"/>
    <property type="match status" value="1"/>
</dbReference>
<dbReference type="PRINTS" id="PR01249">
    <property type="entry name" value="RIBOSOMALL31"/>
</dbReference>
<dbReference type="SUPFAM" id="SSF143800">
    <property type="entry name" value="L28p-like"/>
    <property type="match status" value="1"/>
</dbReference>
<feature type="chain" id="PRO_0000173252" description="Large ribosomal subunit protein bL31B">
    <location>
        <begin position="1"/>
        <end position="86"/>
    </location>
</feature>
<proteinExistence type="inferred from homology"/>
<reference key="1">
    <citation type="journal article" date="2004" name="Nat. Genet.">
        <title>Comparison of genome degradation in Paratyphi A and Typhi, human-restricted serovars of Salmonella enterica that cause typhoid.</title>
        <authorList>
            <person name="McClelland M."/>
            <person name="Sanderson K.E."/>
            <person name="Clifton S.W."/>
            <person name="Latreille P."/>
            <person name="Porwollik S."/>
            <person name="Sabo A."/>
            <person name="Meyer R."/>
            <person name="Bieri T."/>
            <person name="Ozersky P."/>
            <person name="McLellan M."/>
            <person name="Harkins C.R."/>
            <person name="Wang C."/>
            <person name="Nguyen C."/>
            <person name="Berghoff A."/>
            <person name="Elliott G."/>
            <person name="Kohlberg S."/>
            <person name="Strong C."/>
            <person name="Du F."/>
            <person name="Carter J."/>
            <person name="Kremizki C."/>
            <person name="Layman D."/>
            <person name="Leonard S."/>
            <person name="Sun H."/>
            <person name="Fulton L."/>
            <person name="Nash W."/>
            <person name="Miner T."/>
            <person name="Minx P."/>
            <person name="Delehaunty K."/>
            <person name="Fronick C."/>
            <person name="Magrini V."/>
            <person name="Nhan M."/>
            <person name="Warren W."/>
            <person name="Florea L."/>
            <person name="Spieth J."/>
            <person name="Wilson R.K."/>
        </authorList>
    </citation>
    <scope>NUCLEOTIDE SEQUENCE [LARGE SCALE GENOMIC DNA]</scope>
    <source>
        <strain>ATCC 9150 / SARB42</strain>
    </source>
</reference>
<comment type="subunit">
    <text evidence="1">Part of the 50S ribosomal subunit.</text>
</comment>
<comment type="similarity">
    <text evidence="1">Belongs to the bacterial ribosomal protein bL31 family. Type B subfamily.</text>
</comment>
<accession>Q5PFL9</accession>